<evidence type="ECO:0000255" key="1">
    <source>
        <dbReference type="HAMAP-Rule" id="MF_00376"/>
    </source>
</evidence>
<keyword id="KW-0067">ATP-binding</keyword>
<keyword id="KW-0173">Coenzyme A biosynthesis</keyword>
<keyword id="KW-0963">Cytoplasm</keyword>
<keyword id="KW-0418">Kinase</keyword>
<keyword id="KW-0547">Nucleotide-binding</keyword>
<keyword id="KW-1185">Reference proteome</keyword>
<keyword id="KW-0808">Transferase</keyword>
<feature type="chain" id="PRO_0000172953" description="Dephospho-CoA kinase">
    <location>
        <begin position="1"/>
        <end position="197"/>
    </location>
</feature>
<feature type="domain" description="DPCK" evidence="1">
    <location>
        <begin position="4"/>
        <end position="197"/>
    </location>
</feature>
<feature type="binding site" evidence="1">
    <location>
        <begin position="12"/>
        <end position="17"/>
    </location>
    <ligand>
        <name>ATP</name>
        <dbReference type="ChEBI" id="CHEBI:30616"/>
    </ligand>
</feature>
<organism>
    <name type="scientific">Lactiplantibacillus plantarum (strain ATCC BAA-793 / NCIMB 8826 / WCFS1)</name>
    <name type="common">Lactobacillus plantarum</name>
    <dbReference type="NCBI Taxonomy" id="220668"/>
    <lineage>
        <taxon>Bacteria</taxon>
        <taxon>Bacillati</taxon>
        <taxon>Bacillota</taxon>
        <taxon>Bacilli</taxon>
        <taxon>Lactobacillales</taxon>
        <taxon>Lactobacillaceae</taxon>
        <taxon>Lactiplantibacillus</taxon>
    </lineage>
</organism>
<comment type="function">
    <text evidence="1">Catalyzes the phosphorylation of the 3'-hydroxyl group of dephosphocoenzyme A to form coenzyme A.</text>
</comment>
<comment type="catalytic activity">
    <reaction evidence="1">
        <text>3'-dephospho-CoA + ATP = ADP + CoA + H(+)</text>
        <dbReference type="Rhea" id="RHEA:18245"/>
        <dbReference type="ChEBI" id="CHEBI:15378"/>
        <dbReference type="ChEBI" id="CHEBI:30616"/>
        <dbReference type="ChEBI" id="CHEBI:57287"/>
        <dbReference type="ChEBI" id="CHEBI:57328"/>
        <dbReference type="ChEBI" id="CHEBI:456216"/>
        <dbReference type="EC" id="2.7.1.24"/>
    </reaction>
</comment>
<comment type="pathway">
    <text evidence="1">Cofactor biosynthesis; coenzyme A biosynthesis; CoA from (R)-pantothenate: step 5/5.</text>
</comment>
<comment type="subcellular location">
    <subcellularLocation>
        <location evidence="1">Cytoplasm</location>
    </subcellularLocation>
</comment>
<comment type="similarity">
    <text evidence="1">Belongs to the CoaE family.</text>
</comment>
<accession>Q88WV3</accession>
<accession>F9UNP7</accession>
<sequence>MTKLIGLTGGIATGKSTVSKLLATKLPIVDADKIAWQVEGPGQPTTQKIVAHFGQQAVLADGRLNRPWLGQLVFNDAQALQALTAITRLPIQYAMFEAIVAANQQQPDAIILDVPLLFESGWQHVCDQVLVVTASPAVVLQRLMARNHLSQQAAQARIDSQMPLAQKVARADVVIDNGANIDKTKAAVLKWLKTITK</sequence>
<reference key="1">
    <citation type="journal article" date="2003" name="Proc. Natl. Acad. Sci. U.S.A.">
        <title>Complete genome sequence of Lactobacillus plantarum WCFS1.</title>
        <authorList>
            <person name="Kleerebezem M."/>
            <person name="Boekhorst J."/>
            <person name="van Kranenburg R."/>
            <person name="Molenaar D."/>
            <person name="Kuipers O.P."/>
            <person name="Leer R."/>
            <person name="Tarchini R."/>
            <person name="Peters S.A."/>
            <person name="Sandbrink H.M."/>
            <person name="Fiers M.W.E.J."/>
            <person name="Stiekema W."/>
            <person name="Klein Lankhorst R.M."/>
            <person name="Bron P.A."/>
            <person name="Hoffer S.M."/>
            <person name="Nierop Groot M.N."/>
            <person name="Kerkhoven R."/>
            <person name="De Vries M."/>
            <person name="Ursing B."/>
            <person name="De Vos W.M."/>
            <person name="Siezen R.J."/>
        </authorList>
    </citation>
    <scope>NUCLEOTIDE SEQUENCE [LARGE SCALE GENOMIC DNA]</scope>
    <source>
        <strain>ATCC BAA-793 / NCIMB 8826 / WCFS1</strain>
    </source>
</reference>
<reference key="2">
    <citation type="journal article" date="2012" name="J. Bacteriol.">
        <title>Complete resequencing and reannotation of the Lactobacillus plantarum WCFS1 genome.</title>
        <authorList>
            <person name="Siezen R.J."/>
            <person name="Francke C."/>
            <person name="Renckens B."/>
            <person name="Boekhorst J."/>
            <person name="Wels M."/>
            <person name="Kleerebezem M."/>
            <person name="van Hijum S.A."/>
        </authorList>
    </citation>
    <scope>NUCLEOTIDE SEQUENCE [LARGE SCALE GENOMIC DNA]</scope>
    <scope>GENOME REANNOTATION</scope>
    <source>
        <strain>ATCC BAA-793 / NCIMB 8826 / WCFS1</strain>
    </source>
</reference>
<dbReference type="EC" id="2.7.1.24" evidence="1"/>
<dbReference type="EMBL" id="AL935263">
    <property type="protein sequence ID" value="CCC78836.1"/>
    <property type="molecule type" value="Genomic_DNA"/>
</dbReference>
<dbReference type="RefSeq" id="WP_011101452.1">
    <property type="nucleotide sequence ID" value="NC_004567.2"/>
</dbReference>
<dbReference type="RefSeq" id="YP_004889350.1">
    <property type="nucleotide sequence ID" value="NC_004567.2"/>
</dbReference>
<dbReference type="SMR" id="Q88WV3"/>
<dbReference type="STRING" id="220668.lp_1510"/>
<dbReference type="EnsemblBacteria" id="CCC78836">
    <property type="protein sequence ID" value="CCC78836"/>
    <property type="gene ID" value="lp_1510"/>
</dbReference>
<dbReference type="KEGG" id="lpl:lp_1510"/>
<dbReference type="PATRIC" id="fig|220668.9.peg.1270"/>
<dbReference type="eggNOG" id="COG0237">
    <property type="taxonomic scope" value="Bacteria"/>
</dbReference>
<dbReference type="HOGENOM" id="CLU_057180_0_0_9"/>
<dbReference type="OrthoDB" id="9812943at2"/>
<dbReference type="PhylomeDB" id="Q88WV3"/>
<dbReference type="UniPathway" id="UPA00241">
    <property type="reaction ID" value="UER00356"/>
</dbReference>
<dbReference type="Proteomes" id="UP000000432">
    <property type="component" value="Chromosome"/>
</dbReference>
<dbReference type="GO" id="GO:0005737">
    <property type="term" value="C:cytoplasm"/>
    <property type="evidence" value="ECO:0007669"/>
    <property type="project" value="UniProtKB-SubCell"/>
</dbReference>
<dbReference type="GO" id="GO:0005524">
    <property type="term" value="F:ATP binding"/>
    <property type="evidence" value="ECO:0007669"/>
    <property type="project" value="UniProtKB-UniRule"/>
</dbReference>
<dbReference type="GO" id="GO:0004140">
    <property type="term" value="F:dephospho-CoA kinase activity"/>
    <property type="evidence" value="ECO:0007669"/>
    <property type="project" value="UniProtKB-UniRule"/>
</dbReference>
<dbReference type="GO" id="GO:0015937">
    <property type="term" value="P:coenzyme A biosynthetic process"/>
    <property type="evidence" value="ECO:0007669"/>
    <property type="project" value="UniProtKB-UniRule"/>
</dbReference>
<dbReference type="CDD" id="cd02022">
    <property type="entry name" value="DPCK"/>
    <property type="match status" value="1"/>
</dbReference>
<dbReference type="FunFam" id="3.40.50.300:FF:000991">
    <property type="entry name" value="Dephospho-CoA kinase"/>
    <property type="match status" value="1"/>
</dbReference>
<dbReference type="Gene3D" id="3.40.50.300">
    <property type="entry name" value="P-loop containing nucleotide triphosphate hydrolases"/>
    <property type="match status" value="1"/>
</dbReference>
<dbReference type="HAMAP" id="MF_00376">
    <property type="entry name" value="Dephospho_CoA_kinase"/>
    <property type="match status" value="1"/>
</dbReference>
<dbReference type="InterPro" id="IPR001977">
    <property type="entry name" value="Depp_CoAkinase"/>
</dbReference>
<dbReference type="InterPro" id="IPR027417">
    <property type="entry name" value="P-loop_NTPase"/>
</dbReference>
<dbReference type="NCBIfam" id="TIGR00152">
    <property type="entry name" value="dephospho-CoA kinase"/>
    <property type="match status" value="1"/>
</dbReference>
<dbReference type="PANTHER" id="PTHR10695:SF46">
    <property type="entry name" value="BIFUNCTIONAL COENZYME A SYNTHASE-RELATED"/>
    <property type="match status" value="1"/>
</dbReference>
<dbReference type="PANTHER" id="PTHR10695">
    <property type="entry name" value="DEPHOSPHO-COA KINASE-RELATED"/>
    <property type="match status" value="1"/>
</dbReference>
<dbReference type="Pfam" id="PF01121">
    <property type="entry name" value="CoaE"/>
    <property type="match status" value="1"/>
</dbReference>
<dbReference type="SUPFAM" id="SSF52540">
    <property type="entry name" value="P-loop containing nucleoside triphosphate hydrolases"/>
    <property type="match status" value="1"/>
</dbReference>
<dbReference type="PROSITE" id="PS51219">
    <property type="entry name" value="DPCK"/>
    <property type="match status" value="1"/>
</dbReference>
<protein>
    <recommendedName>
        <fullName evidence="1">Dephospho-CoA kinase</fullName>
        <ecNumber evidence="1">2.7.1.24</ecNumber>
    </recommendedName>
    <alternativeName>
        <fullName evidence="1">Dephosphocoenzyme A kinase</fullName>
    </alternativeName>
</protein>
<proteinExistence type="inferred from homology"/>
<gene>
    <name evidence="1" type="primary">coaE</name>
    <name type="ordered locus">lp_1510</name>
</gene>
<name>COAE_LACPL</name>